<organism>
    <name type="scientific">Thermoplasma volcanium (strain ATCC 51530 / DSM 4299 / JCM 9571 / NBRC 15438 / GSS1)</name>
    <dbReference type="NCBI Taxonomy" id="273116"/>
    <lineage>
        <taxon>Archaea</taxon>
        <taxon>Methanobacteriati</taxon>
        <taxon>Thermoplasmatota</taxon>
        <taxon>Thermoplasmata</taxon>
        <taxon>Thermoplasmatales</taxon>
        <taxon>Thermoplasmataceae</taxon>
        <taxon>Thermoplasma</taxon>
    </lineage>
</organism>
<gene>
    <name evidence="1" type="primary">ndk</name>
    <name type="ordered locus">TV0450</name>
    <name type="ORF">TVG0438422</name>
</gene>
<reference key="1">
    <citation type="journal article" date="2000" name="Proc. Natl. Acad. Sci. U.S.A.">
        <title>Archaeal adaptation to higher temperatures revealed by genomic sequence of Thermoplasma volcanium.</title>
        <authorList>
            <person name="Kawashima T."/>
            <person name="Amano N."/>
            <person name="Koike H."/>
            <person name="Makino S."/>
            <person name="Higuchi S."/>
            <person name="Kawashima-Ohya Y."/>
            <person name="Watanabe K."/>
            <person name="Yamazaki M."/>
            <person name="Kanehori K."/>
            <person name="Kawamoto T."/>
            <person name="Nunoshiba T."/>
            <person name="Yamamoto Y."/>
            <person name="Aramaki H."/>
            <person name="Makino K."/>
            <person name="Suzuki M."/>
        </authorList>
    </citation>
    <scope>NUCLEOTIDE SEQUENCE [LARGE SCALE GENOMIC DNA]</scope>
    <source>
        <strain>ATCC 51530 / DSM 4299 / JCM 9571 / NBRC 15438 / GSS1</strain>
    </source>
</reference>
<comment type="function">
    <text evidence="1">Major role in the synthesis of nucleoside triphosphates other than ATP. The ATP gamma phosphate is transferred to the NDP beta phosphate via a ping-pong mechanism, using a phosphorylated active-site intermediate.</text>
</comment>
<comment type="catalytic activity">
    <reaction evidence="1">
        <text>a 2'-deoxyribonucleoside 5'-diphosphate + ATP = a 2'-deoxyribonucleoside 5'-triphosphate + ADP</text>
        <dbReference type="Rhea" id="RHEA:44640"/>
        <dbReference type="ChEBI" id="CHEBI:30616"/>
        <dbReference type="ChEBI" id="CHEBI:61560"/>
        <dbReference type="ChEBI" id="CHEBI:73316"/>
        <dbReference type="ChEBI" id="CHEBI:456216"/>
        <dbReference type="EC" id="2.7.4.6"/>
    </reaction>
</comment>
<comment type="catalytic activity">
    <reaction evidence="1">
        <text>a ribonucleoside 5'-diphosphate + ATP = a ribonucleoside 5'-triphosphate + ADP</text>
        <dbReference type="Rhea" id="RHEA:18113"/>
        <dbReference type="ChEBI" id="CHEBI:30616"/>
        <dbReference type="ChEBI" id="CHEBI:57930"/>
        <dbReference type="ChEBI" id="CHEBI:61557"/>
        <dbReference type="ChEBI" id="CHEBI:456216"/>
        <dbReference type="EC" id="2.7.4.6"/>
    </reaction>
</comment>
<comment type="cofactor">
    <cofactor evidence="1">
        <name>Mg(2+)</name>
        <dbReference type="ChEBI" id="CHEBI:18420"/>
    </cofactor>
</comment>
<comment type="subcellular location">
    <subcellularLocation>
        <location evidence="1">Cytoplasm</location>
    </subcellularLocation>
</comment>
<comment type="similarity">
    <text evidence="1">Belongs to the NDK family.</text>
</comment>
<name>NDK_THEVO</name>
<evidence type="ECO:0000255" key="1">
    <source>
        <dbReference type="HAMAP-Rule" id="MF_00451"/>
    </source>
</evidence>
<proteinExistence type="inferred from homology"/>
<keyword id="KW-0067">ATP-binding</keyword>
<keyword id="KW-0963">Cytoplasm</keyword>
<keyword id="KW-0418">Kinase</keyword>
<keyword id="KW-0460">Magnesium</keyword>
<keyword id="KW-0479">Metal-binding</keyword>
<keyword id="KW-0546">Nucleotide metabolism</keyword>
<keyword id="KW-0547">Nucleotide-binding</keyword>
<keyword id="KW-0597">Phosphoprotein</keyword>
<keyword id="KW-0808">Transferase</keyword>
<dbReference type="EC" id="2.7.4.6" evidence="1"/>
<dbReference type="EMBL" id="BA000011">
    <property type="protein sequence ID" value="BAB59592.1"/>
    <property type="molecule type" value="Genomic_DNA"/>
</dbReference>
<dbReference type="RefSeq" id="WP_010916710.1">
    <property type="nucleotide sequence ID" value="NC_002689.2"/>
</dbReference>
<dbReference type="SMR" id="Q97BK5"/>
<dbReference type="STRING" id="273116.gene:9381231"/>
<dbReference type="PaxDb" id="273116-14324665"/>
<dbReference type="GeneID" id="1440968"/>
<dbReference type="KEGG" id="tvo:TVG0438422"/>
<dbReference type="eggNOG" id="arCOG04313">
    <property type="taxonomic scope" value="Archaea"/>
</dbReference>
<dbReference type="HOGENOM" id="CLU_060216_6_3_2"/>
<dbReference type="OrthoDB" id="6874at2157"/>
<dbReference type="PhylomeDB" id="Q97BK5"/>
<dbReference type="Proteomes" id="UP000001017">
    <property type="component" value="Chromosome"/>
</dbReference>
<dbReference type="GO" id="GO:0005737">
    <property type="term" value="C:cytoplasm"/>
    <property type="evidence" value="ECO:0007669"/>
    <property type="project" value="UniProtKB-SubCell"/>
</dbReference>
<dbReference type="GO" id="GO:0005524">
    <property type="term" value="F:ATP binding"/>
    <property type="evidence" value="ECO:0007669"/>
    <property type="project" value="UniProtKB-UniRule"/>
</dbReference>
<dbReference type="GO" id="GO:0046872">
    <property type="term" value="F:metal ion binding"/>
    <property type="evidence" value="ECO:0007669"/>
    <property type="project" value="UniProtKB-KW"/>
</dbReference>
<dbReference type="GO" id="GO:0004550">
    <property type="term" value="F:nucleoside diphosphate kinase activity"/>
    <property type="evidence" value="ECO:0007669"/>
    <property type="project" value="UniProtKB-UniRule"/>
</dbReference>
<dbReference type="GO" id="GO:0006241">
    <property type="term" value="P:CTP biosynthetic process"/>
    <property type="evidence" value="ECO:0007669"/>
    <property type="project" value="UniProtKB-UniRule"/>
</dbReference>
<dbReference type="GO" id="GO:0006183">
    <property type="term" value="P:GTP biosynthetic process"/>
    <property type="evidence" value="ECO:0007669"/>
    <property type="project" value="UniProtKB-UniRule"/>
</dbReference>
<dbReference type="GO" id="GO:0006228">
    <property type="term" value="P:UTP biosynthetic process"/>
    <property type="evidence" value="ECO:0007669"/>
    <property type="project" value="UniProtKB-UniRule"/>
</dbReference>
<dbReference type="CDD" id="cd04413">
    <property type="entry name" value="NDPk_I"/>
    <property type="match status" value="1"/>
</dbReference>
<dbReference type="FunFam" id="3.30.70.141:FF:000003">
    <property type="entry name" value="Nucleoside diphosphate kinase"/>
    <property type="match status" value="1"/>
</dbReference>
<dbReference type="Gene3D" id="3.30.70.141">
    <property type="entry name" value="Nucleoside diphosphate kinase-like domain"/>
    <property type="match status" value="1"/>
</dbReference>
<dbReference type="HAMAP" id="MF_00451">
    <property type="entry name" value="NDP_kinase"/>
    <property type="match status" value="1"/>
</dbReference>
<dbReference type="InterPro" id="IPR034907">
    <property type="entry name" value="NDK-like_dom"/>
</dbReference>
<dbReference type="InterPro" id="IPR036850">
    <property type="entry name" value="NDK-like_dom_sf"/>
</dbReference>
<dbReference type="InterPro" id="IPR001564">
    <property type="entry name" value="Nucleoside_diP_kinase"/>
</dbReference>
<dbReference type="InterPro" id="IPR023005">
    <property type="entry name" value="Nucleoside_diP_kinase_AS"/>
</dbReference>
<dbReference type="NCBIfam" id="NF001908">
    <property type="entry name" value="PRK00668.1"/>
    <property type="match status" value="1"/>
</dbReference>
<dbReference type="PANTHER" id="PTHR11349">
    <property type="entry name" value="NUCLEOSIDE DIPHOSPHATE KINASE"/>
    <property type="match status" value="1"/>
</dbReference>
<dbReference type="Pfam" id="PF00334">
    <property type="entry name" value="NDK"/>
    <property type="match status" value="1"/>
</dbReference>
<dbReference type="PRINTS" id="PR01243">
    <property type="entry name" value="NUCDPKINASE"/>
</dbReference>
<dbReference type="SMART" id="SM00562">
    <property type="entry name" value="NDK"/>
    <property type="match status" value="1"/>
</dbReference>
<dbReference type="SUPFAM" id="SSF54919">
    <property type="entry name" value="Nucleoside diphosphate kinase, NDK"/>
    <property type="match status" value="1"/>
</dbReference>
<dbReference type="PROSITE" id="PS00469">
    <property type="entry name" value="NDPK"/>
    <property type="match status" value="1"/>
</dbReference>
<dbReference type="PROSITE" id="PS51374">
    <property type="entry name" value="NDPK_LIKE"/>
    <property type="match status" value="1"/>
</dbReference>
<feature type="chain" id="PRO_0000137105" description="Nucleoside diphosphate kinase">
    <location>
        <begin position="1"/>
        <end position="147"/>
    </location>
</feature>
<feature type="active site" description="Pros-phosphohistidine intermediate" evidence="1">
    <location>
        <position position="115"/>
    </location>
</feature>
<feature type="binding site" evidence="1">
    <location>
        <position position="9"/>
    </location>
    <ligand>
        <name>ATP</name>
        <dbReference type="ChEBI" id="CHEBI:30616"/>
    </ligand>
</feature>
<feature type="binding site" evidence="1">
    <location>
        <position position="57"/>
    </location>
    <ligand>
        <name>ATP</name>
        <dbReference type="ChEBI" id="CHEBI:30616"/>
    </ligand>
</feature>
<feature type="binding site" evidence="1">
    <location>
        <position position="85"/>
    </location>
    <ligand>
        <name>ATP</name>
        <dbReference type="ChEBI" id="CHEBI:30616"/>
    </ligand>
</feature>
<feature type="binding site" evidence="1">
    <location>
        <position position="91"/>
    </location>
    <ligand>
        <name>ATP</name>
        <dbReference type="ChEBI" id="CHEBI:30616"/>
    </ligand>
</feature>
<feature type="binding site" evidence="1">
    <location>
        <position position="102"/>
    </location>
    <ligand>
        <name>ATP</name>
        <dbReference type="ChEBI" id="CHEBI:30616"/>
    </ligand>
</feature>
<feature type="binding site" evidence="1">
    <location>
        <position position="112"/>
    </location>
    <ligand>
        <name>ATP</name>
        <dbReference type="ChEBI" id="CHEBI:30616"/>
    </ligand>
</feature>
<protein>
    <recommendedName>
        <fullName evidence="1">Nucleoside diphosphate kinase</fullName>
        <shortName evidence="1">NDK</shortName>
        <shortName evidence="1">NDP kinase</shortName>
        <ecNumber evidence="1">2.7.4.6</ecNumber>
    </recommendedName>
    <alternativeName>
        <fullName evidence="1">Nucleoside-2-P kinase</fullName>
    </alternativeName>
</protein>
<accession>Q97BK5</accession>
<sequence length="147" mass="16664">MDRTLVLLKPDAVKRRLVGKIIERFEEKGLKIVAMKFMQMTKDQAKTHYSVHQNKPFFNDLVNYITSGPIVAMILEGAHAIEIVRLMSGATDGSKAQPGTIRGDYSMGIEKNIIHASDSLEAYNHEMPIFFSDNEIIEWAYGDEVIY</sequence>